<proteinExistence type="inferred from homology"/>
<dbReference type="EC" id="6.1.1.19" evidence="1"/>
<dbReference type="EMBL" id="CP000141">
    <property type="protein sequence ID" value="ABB14929.1"/>
    <property type="molecule type" value="Genomic_DNA"/>
</dbReference>
<dbReference type="RefSeq" id="WP_011343072.1">
    <property type="nucleotide sequence ID" value="NC_007503.1"/>
</dbReference>
<dbReference type="SMR" id="Q3AFT8"/>
<dbReference type="FunCoup" id="Q3AFT8">
    <property type="interactions" value="403"/>
</dbReference>
<dbReference type="STRING" id="246194.CHY_0124"/>
<dbReference type="KEGG" id="chy:CHY_0124"/>
<dbReference type="eggNOG" id="COG0018">
    <property type="taxonomic scope" value="Bacteria"/>
</dbReference>
<dbReference type="HOGENOM" id="CLU_006406_0_1_9"/>
<dbReference type="InParanoid" id="Q3AFT8"/>
<dbReference type="OrthoDB" id="9805987at2"/>
<dbReference type="Proteomes" id="UP000002706">
    <property type="component" value="Chromosome"/>
</dbReference>
<dbReference type="GO" id="GO:0005737">
    <property type="term" value="C:cytoplasm"/>
    <property type="evidence" value="ECO:0007669"/>
    <property type="project" value="UniProtKB-SubCell"/>
</dbReference>
<dbReference type="GO" id="GO:0004814">
    <property type="term" value="F:arginine-tRNA ligase activity"/>
    <property type="evidence" value="ECO:0007669"/>
    <property type="project" value="UniProtKB-UniRule"/>
</dbReference>
<dbReference type="GO" id="GO:0005524">
    <property type="term" value="F:ATP binding"/>
    <property type="evidence" value="ECO:0007669"/>
    <property type="project" value="UniProtKB-UniRule"/>
</dbReference>
<dbReference type="GO" id="GO:0006420">
    <property type="term" value="P:arginyl-tRNA aminoacylation"/>
    <property type="evidence" value="ECO:0007669"/>
    <property type="project" value="UniProtKB-UniRule"/>
</dbReference>
<dbReference type="CDD" id="cd00671">
    <property type="entry name" value="ArgRS_core"/>
    <property type="match status" value="1"/>
</dbReference>
<dbReference type="FunFam" id="1.10.730.10:FF:000008">
    <property type="entry name" value="Arginine--tRNA ligase"/>
    <property type="match status" value="1"/>
</dbReference>
<dbReference type="FunFam" id="3.30.1360.70:FF:000003">
    <property type="entry name" value="Arginine--tRNA ligase"/>
    <property type="match status" value="1"/>
</dbReference>
<dbReference type="FunFam" id="3.40.50.620:FF:000062">
    <property type="entry name" value="Arginine--tRNA ligase"/>
    <property type="match status" value="1"/>
</dbReference>
<dbReference type="Gene3D" id="3.30.1360.70">
    <property type="entry name" value="Arginyl tRNA synthetase N-terminal domain"/>
    <property type="match status" value="1"/>
</dbReference>
<dbReference type="Gene3D" id="3.40.50.620">
    <property type="entry name" value="HUPs"/>
    <property type="match status" value="1"/>
</dbReference>
<dbReference type="Gene3D" id="1.10.730.10">
    <property type="entry name" value="Isoleucyl-tRNA Synthetase, Domain 1"/>
    <property type="match status" value="1"/>
</dbReference>
<dbReference type="HAMAP" id="MF_00123">
    <property type="entry name" value="Arg_tRNA_synth"/>
    <property type="match status" value="1"/>
</dbReference>
<dbReference type="InterPro" id="IPR001412">
    <property type="entry name" value="aa-tRNA-synth_I_CS"/>
</dbReference>
<dbReference type="InterPro" id="IPR001278">
    <property type="entry name" value="Arg-tRNA-ligase"/>
</dbReference>
<dbReference type="InterPro" id="IPR005148">
    <property type="entry name" value="Arg-tRNA-synth_N"/>
</dbReference>
<dbReference type="InterPro" id="IPR036695">
    <property type="entry name" value="Arg-tRNA-synth_N_sf"/>
</dbReference>
<dbReference type="InterPro" id="IPR035684">
    <property type="entry name" value="ArgRS_core"/>
</dbReference>
<dbReference type="InterPro" id="IPR008909">
    <property type="entry name" value="DALR_anticod-bd"/>
</dbReference>
<dbReference type="InterPro" id="IPR014729">
    <property type="entry name" value="Rossmann-like_a/b/a_fold"/>
</dbReference>
<dbReference type="InterPro" id="IPR009080">
    <property type="entry name" value="tRNAsynth_Ia_anticodon-bd"/>
</dbReference>
<dbReference type="NCBIfam" id="TIGR00456">
    <property type="entry name" value="argS"/>
    <property type="match status" value="1"/>
</dbReference>
<dbReference type="PANTHER" id="PTHR11956:SF5">
    <property type="entry name" value="ARGININE--TRNA LIGASE, CYTOPLASMIC"/>
    <property type="match status" value="1"/>
</dbReference>
<dbReference type="PANTHER" id="PTHR11956">
    <property type="entry name" value="ARGINYL-TRNA SYNTHETASE"/>
    <property type="match status" value="1"/>
</dbReference>
<dbReference type="Pfam" id="PF03485">
    <property type="entry name" value="Arg_tRNA_synt_N"/>
    <property type="match status" value="1"/>
</dbReference>
<dbReference type="Pfam" id="PF05746">
    <property type="entry name" value="DALR_1"/>
    <property type="match status" value="1"/>
</dbReference>
<dbReference type="Pfam" id="PF00750">
    <property type="entry name" value="tRNA-synt_1d"/>
    <property type="match status" value="1"/>
</dbReference>
<dbReference type="PRINTS" id="PR01038">
    <property type="entry name" value="TRNASYNTHARG"/>
</dbReference>
<dbReference type="SMART" id="SM01016">
    <property type="entry name" value="Arg_tRNA_synt_N"/>
    <property type="match status" value="1"/>
</dbReference>
<dbReference type="SMART" id="SM00836">
    <property type="entry name" value="DALR_1"/>
    <property type="match status" value="1"/>
</dbReference>
<dbReference type="SUPFAM" id="SSF47323">
    <property type="entry name" value="Anticodon-binding domain of a subclass of class I aminoacyl-tRNA synthetases"/>
    <property type="match status" value="1"/>
</dbReference>
<dbReference type="SUPFAM" id="SSF55190">
    <property type="entry name" value="Arginyl-tRNA synthetase (ArgRS), N-terminal 'additional' domain"/>
    <property type="match status" value="1"/>
</dbReference>
<dbReference type="SUPFAM" id="SSF52374">
    <property type="entry name" value="Nucleotidylyl transferase"/>
    <property type="match status" value="1"/>
</dbReference>
<dbReference type="PROSITE" id="PS00178">
    <property type="entry name" value="AA_TRNA_LIGASE_I"/>
    <property type="match status" value="1"/>
</dbReference>
<protein>
    <recommendedName>
        <fullName evidence="1">Arginine--tRNA ligase</fullName>
        <ecNumber evidence="1">6.1.1.19</ecNumber>
    </recommendedName>
    <alternativeName>
        <fullName evidence="1">Arginyl-tRNA synthetase</fullName>
        <shortName evidence="1">ArgRS</shortName>
    </alternativeName>
</protein>
<comment type="catalytic activity">
    <reaction evidence="1">
        <text>tRNA(Arg) + L-arginine + ATP = L-arginyl-tRNA(Arg) + AMP + diphosphate</text>
        <dbReference type="Rhea" id="RHEA:20301"/>
        <dbReference type="Rhea" id="RHEA-COMP:9658"/>
        <dbReference type="Rhea" id="RHEA-COMP:9673"/>
        <dbReference type="ChEBI" id="CHEBI:30616"/>
        <dbReference type="ChEBI" id="CHEBI:32682"/>
        <dbReference type="ChEBI" id="CHEBI:33019"/>
        <dbReference type="ChEBI" id="CHEBI:78442"/>
        <dbReference type="ChEBI" id="CHEBI:78513"/>
        <dbReference type="ChEBI" id="CHEBI:456215"/>
        <dbReference type="EC" id="6.1.1.19"/>
    </reaction>
</comment>
<comment type="subunit">
    <text evidence="1">Monomer.</text>
</comment>
<comment type="subcellular location">
    <subcellularLocation>
        <location evidence="1">Cytoplasm</location>
    </subcellularLocation>
</comment>
<comment type="similarity">
    <text evidence="1">Belongs to the class-I aminoacyl-tRNA synthetase family.</text>
</comment>
<reference key="1">
    <citation type="journal article" date="2005" name="PLoS Genet.">
        <title>Life in hot carbon monoxide: the complete genome sequence of Carboxydothermus hydrogenoformans Z-2901.</title>
        <authorList>
            <person name="Wu M."/>
            <person name="Ren Q."/>
            <person name="Durkin A.S."/>
            <person name="Daugherty S.C."/>
            <person name="Brinkac L.M."/>
            <person name="Dodson R.J."/>
            <person name="Madupu R."/>
            <person name="Sullivan S.A."/>
            <person name="Kolonay J.F."/>
            <person name="Nelson W.C."/>
            <person name="Tallon L.J."/>
            <person name="Jones K.M."/>
            <person name="Ulrich L.E."/>
            <person name="Gonzalez J.M."/>
            <person name="Zhulin I.B."/>
            <person name="Robb F.T."/>
            <person name="Eisen J.A."/>
        </authorList>
    </citation>
    <scope>NUCLEOTIDE SEQUENCE [LARGE SCALE GENOMIC DNA]</scope>
    <source>
        <strain>ATCC BAA-161 / DSM 6008 / Z-2901</strain>
    </source>
</reference>
<evidence type="ECO:0000255" key="1">
    <source>
        <dbReference type="HAMAP-Rule" id="MF_00123"/>
    </source>
</evidence>
<gene>
    <name evidence="1" type="primary">argS</name>
    <name type="ordered locus">CHY_0124</name>
</gene>
<organism>
    <name type="scientific">Carboxydothermus hydrogenoformans (strain ATCC BAA-161 / DSM 6008 / Z-2901)</name>
    <dbReference type="NCBI Taxonomy" id="246194"/>
    <lineage>
        <taxon>Bacteria</taxon>
        <taxon>Bacillati</taxon>
        <taxon>Bacillota</taxon>
        <taxon>Clostridia</taxon>
        <taxon>Thermoanaerobacterales</taxon>
        <taxon>Thermoanaerobacteraceae</taxon>
        <taxon>Carboxydothermus</taxon>
    </lineage>
</organism>
<accession>Q3AFT8</accession>
<sequence>MEYLLQRITGEIAGSLRRAAVKAGYLDAEDELAFELEKPKEKAHGDLATNLAMLLTKKARKNPREIAATLLEYLEIPAVVERVEIAGPGFINFYFKKDWVVAVIPEILSFGEKYGRLAIGAGKRVQVEFVSANPTGLLHMGNGRGAALGDILANILTEAGYEVSREYYINDAGNQIENFNKSVEARYLELLGYKVEFPEEGYHGEDIIDTARNIVARFGDRFIHLPEKERQEALGKIALEEKLQSIKKSLENFGVKYDVWFSERSLHESGEVEKTVKLLLERGYLYEKDGALWFAASKLGEEKDEVLVRKNGVPTYYAADIAYHKNKFDRGFDLVINIWGADHHGHVSRMKTALKALGYDPERLIVILMQLVRLFQGGELVRMSKRTGQYITLDELVEEVGVDAARYFFVMRSHDAHLDFDLDLAKEKSNENPVYYIQYAHARIMSLYRQCNEQGVTLPPVEDVDLAILSSEAELNLLRHLAEFPVEIEKCATALAPHHLARYLHELAGYFHTFYNSCRVLGVEENLSKARLLLVEATRIVLRKGLKMLGVSAPEKM</sequence>
<feature type="chain" id="PRO_0000242003" description="Arginine--tRNA ligase">
    <location>
        <begin position="1"/>
        <end position="557"/>
    </location>
</feature>
<feature type="short sequence motif" description="'HIGH' region">
    <location>
        <begin position="132"/>
        <end position="142"/>
    </location>
</feature>
<keyword id="KW-0030">Aminoacyl-tRNA synthetase</keyword>
<keyword id="KW-0067">ATP-binding</keyword>
<keyword id="KW-0963">Cytoplasm</keyword>
<keyword id="KW-0436">Ligase</keyword>
<keyword id="KW-0547">Nucleotide-binding</keyword>
<keyword id="KW-0648">Protein biosynthesis</keyword>
<keyword id="KW-1185">Reference proteome</keyword>
<name>SYR_CARHZ</name>